<reference key="1">
    <citation type="journal article" date="2007" name="ISME J.">
        <title>Population level functional diversity in a microbial community revealed by comparative genomic and metagenomic analyses.</title>
        <authorList>
            <person name="Bhaya D."/>
            <person name="Grossman A.R."/>
            <person name="Steunou A.-S."/>
            <person name="Khuri N."/>
            <person name="Cohan F.M."/>
            <person name="Hamamura N."/>
            <person name="Melendrez M.C."/>
            <person name="Bateson M.M."/>
            <person name="Ward D.M."/>
            <person name="Heidelberg J.F."/>
        </authorList>
    </citation>
    <scope>NUCLEOTIDE SEQUENCE [LARGE SCALE GENOMIC DNA]</scope>
    <source>
        <strain>JA-3-3Ab</strain>
    </source>
</reference>
<accession>Q2JQD1</accession>
<comment type="function">
    <text evidence="1">Could be involved in insertion of integral membrane proteins into the membrane.</text>
</comment>
<comment type="subcellular location">
    <subcellularLocation>
        <location evidence="1">Cell inner membrane</location>
        <topology evidence="1">Peripheral membrane protein</topology>
        <orientation evidence="1">Cytoplasmic side</orientation>
    </subcellularLocation>
</comment>
<comment type="similarity">
    <text evidence="1">Belongs to the UPF0161 family.</text>
</comment>
<name>YIDD_SYNJA</name>
<organism>
    <name type="scientific">Synechococcus sp. (strain JA-3-3Ab)</name>
    <name type="common">Cyanobacteria bacterium Yellowstone A-Prime</name>
    <dbReference type="NCBI Taxonomy" id="321327"/>
    <lineage>
        <taxon>Bacteria</taxon>
        <taxon>Bacillati</taxon>
        <taxon>Cyanobacteriota</taxon>
        <taxon>Cyanophyceae</taxon>
        <taxon>Synechococcales</taxon>
        <taxon>Synechococcaceae</taxon>
        <taxon>Synechococcus</taxon>
    </lineage>
</organism>
<dbReference type="EMBL" id="CP000239">
    <property type="protein sequence ID" value="ABD00711.1"/>
    <property type="molecule type" value="Genomic_DNA"/>
</dbReference>
<dbReference type="RefSeq" id="WP_011431384.1">
    <property type="nucleotide sequence ID" value="NC_007775.1"/>
</dbReference>
<dbReference type="STRING" id="321327.CYA_2594"/>
<dbReference type="KEGG" id="cya:CYA_2594"/>
<dbReference type="eggNOG" id="COG0759">
    <property type="taxonomic scope" value="Bacteria"/>
</dbReference>
<dbReference type="HOGENOM" id="CLU_144811_2_2_3"/>
<dbReference type="OrthoDB" id="9801753at2"/>
<dbReference type="Proteomes" id="UP000008818">
    <property type="component" value="Chromosome"/>
</dbReference>
<dbReference type="GO" id="GO:0005886">
    <property type="term" value="C:plasma membrane"/>
    <property type="evidence" value="ECO:0007669"/>
    <property type="project" value="UniProtKB-SubCell"/>
</dbReference>
<dbReference type="HAMAP" id="MF_00386">
    <property type="entry name" value="UPF0161_YidD"/>
    <property type="match status" value="1"/>
</dbReference>
<dbReference type="InterPro" id="IPR002696">
    <property type="entry name" value="Membr_insert_effic_factor_YidD"/>
</dbReference>
<dbReference type="NCBIfam" id="TIGR00278">
    <property type="entry name" value="membrane protein insertion efficiency factor YidD"/>
    <property type="match status" value="1"/>
</dbReference>
<dbReference type="PANTHER" id="PTHR33383">
    <property type="entry name" value="MEMBRANE PROTEIN INSERTION EFFICIENCY FACTOR-RELATED"/>
    <property type="match status" value="1"/>
</dbReference>
<dbReference type="PANTHER" id="PTHR33383:SF1">
    <property type="entry name" value="MEMBRANE PROTEIN INSERTION EFFICIENCY FACTOR-RELATED"/>
    <property type="match status" value="1"/>
</dbReference>
<dbReference type="Pfam" id="PF01809">
    <property type="entry name" value="YidD"/>
    <property type="match status" value="1"/>
</dbReference>
<dbReference type="SMART" id="SM01234">
    <property type="entry name" value="Haemolytic"/>
    <property type="match status" value="1"/>
</dbReference>
<protein>
    <recommendedName>
        <fullName evidence="1">Putative membrane protein insertion efficiency factor</fullName>
    </recommendedName>
</protein>
<keyword id="KW-0997">Cell inner membrane</keyword>
<keyword id="KW-1003">Cell membrane</keyword>
<keyword id="KW-0472">Membrane</keyword>
<evidence type="ECO:0000255" key="1">
    <source>
        <dbReference type="HAMAP-Rule" id="MF_00386"/>
    </source>
</evidence>
<evidence type="ECO:0000256" key="2">
    <source>
        <dbReference type="SAM" id="MobiDB-lite"/>
    </source>
</evidence>
<proteinExistence type="inferred from homology"/>
<sequence>MAERSDPLTRGLVALIRGYQVAISPLLPPACRYYPTCSQYTLEAVRRYGAIRGSWLGIRRLCRCHPWHPGGYDPVPDLPGSAPEENGRPSPDGQHSGSGG</sequence>
<feature type="chain" id="PRO_0000253189" description="Putative membrane protein insertion efficiency factor">
    <location>
        <begin position="1"/>
        <end position="100"/>
    </location>
</feature>
<feature type="region of interest" description="Disordered" evidence="2">
    <location>
        <begin position="73"/>
        <end position="100"/>
    </location>
</feature>
<gene>
    <name type="ordered locus">CYA_2594</name>
</gene>